<accession>P04366</accession>
<accession>P34954</accession>
<organism>
    <name type="scientific">Sus scrofa</name>
    <name type="common">Pig</name>
    <dbReference type="NCBI Taxonomy" id="9823"/>
    <lineage>
        <taxon>Eukaryota</taxon>
        <taxon>Metazoa</taxon>
        <taxon>Chordata</taxon>
        <taxon>Craniata</taxon>
        <taxon>Vertebrata</taxon>
        <taxon>Euteleostomi</taxon>
        <taxon>Mammalia</taxon>
        <taxon>Eutheria</taxon>
        <taxon>Laurasiatheria</taxon>
        <taxon>Artiodactyla</taxon>
        <taxon>Suina</taxon>
        <taxon>Suidae</taxon>
        <taxon>Sus</taxon>
    </lineage>
</organism>
<comment type="function">
    <molecule>Alpha-1-microglobulin</molecule>
    <text evidence="2 3">Antioxidant and tissue repair protein with reductase, heme-binding and radical-scavenging activities. Removes and protects against harmful oxidants and repairs macromolecules in intravascular and extravascular spaces and in intracellular compartments. Intravascularly, plays a regulatory role in red cell homeostasis by preventing heme- and reactive oxygen species-induced cell damage. Binds and degrades free heme to protect fetal and adult red blood cells from hemolysis. Reduces extracellular methemoglobin, a Fe3+ (ferric) form of hemoglobin that cannot bind oxygen, back to the Fe2+ (ferrous) form deoxyhemoglobin, which has oxygen-carrying potential. Upon acute inflammation, inhibits oxidation of low-density lipoprotein particles by MPO and limits vascular damage. Extravascularly, protects from oxidation products formed on extracellular matrix structures and cell membranes. Catalyzes the reduction of carbonyl groups on oxidized collagen fibers and preserves cellular and extracellular matrix ultrastructures. Importantly, counteracts the oxidative damage at blood-placenta interface, preventing leakage of free fetal hemoglobin into the maternal circulation. Intracellularly, has a role in maintaining mitochondrial redox homeostasis. Bound to complex I of the respiratory chain of mitochondria, may scavenge free radicals and preserve mitochondrial ATP synthesis. Protects renal tubule epithelial cells from heme-induced oxidative damage to mitochondria. Reduces cytochrome c from Fe3+ (ferric) to the Fe2+ (ferrous) state through formation of superoxide anion radicals in the presence of ascorbate or NADH/NADPH electron donor cofactors, ascorbate being the preferred cofactor (By similarity). Has a chaperone role in facilitating the correct folding of bikunin in the endoplasmic reticulum compartment (By similarity).</text>
</comment>
<comment type="function">
    <molecule>Inter-alpha-trypsin inhibitor light chain</molecule>
    <text evidence="2 3">Kunitz-type serine protease inhibitor and structural component of extracellular matrix with a role in extracellular space remodeling and cell adhesion. Among others, has antiprotease activity toward kallikrein, a protease involved in airway inflammation; inhibits GZMK/granzyme, a granule-stored serine protease involved in NK and T cell cytotoxic responses; and inhibits PLG/plasmin, a protease required for activation of matrix metalloproteinases. As part of I-alpha-I complex, provides for the heavy chains to be transferred from I-alpha-I complex to hyaluronan in the presence of TNFAIP6, in a dynamic process that releases free bikunin and remodels extracellular matrix proteoglycan structures. Free bikunin, but not its heavy chain-bound form, acts as a potent protease inhibitor in airway secretions (By similarity). Part of hyaluronan-rich extracellular matrix that surrounds oocyte during cumulus oophorus expansion, an indispensable process for proper ovulation (By similarity). Also inhibits calcium oxalate crystallization (By similarity).</text>
</comment>
<comment type="function">
    <molecule>Trypstatin</molecule>
    <text evidence="4">Kunitz-type serine protease inhibitor. Has high catalytic efficiency for F10/blood coagulation factor Xa and may act as an anticoagulant by inhibiting prothrombin activation. Inhibits trypsin and mast cell CMA1/chymase and tryptase proteases.</text>
</comment>
<comment type="subunit">
    <molecule>Alpha-1-microglobulin</molecule>
    <text evidence="2 4">Monomer. Homodimer. In plasma, it occurs as a monomer or dimer and in covalently-linked complexes with immunoglobulin A (IgA), ALB/albumin and F2/prothrombin. Chromophore-bound alpha-1-microglobulin interacts with the constant region of immunoglobulin A. Chromophore-bound alpha-1-microglobulin interacts with ALB with molar ratio 2:1 and 1:1; this interaction does not prevent fatty acid binding to ALB. Interacts with F2/prothrombin (via N-terminus) with molar ratio 2:1 and 1:1; this interaction does not prevent the activation of prothrombin to thrombin. Interacts with NDUFAB1, a subunit of mitochondrial complex I (By similarity). Interacts with FN1 (By similarity).</text>
</comment>
<comment type="subunit">
    <molecule>Inter-alpha-trypsin inhibitor light chain</molecule>
    <text evidence="2">I-alpha-I plasma protease inhibitors are assembled from one or two heavy chains (HC) and one light chain, bikunin. Inter-alpha-inhibitor (I-alpha-I) is composed of ITIH1/HC1, ITIH2/HC2 and bikunin, and pre-alpha-inhibitor (P-alpha-I) of ITIH3/HC3 and bikunin. Interacts with TNFAIP6 (via Link domain).</text>
</comment>
<comment type="subunit">
    <molecule>Trypstatin</molecule>
    <text evidence="4">Monomer. Also occurs as a complex with tryptase in mast cells.</text>
</comment>
<comment type="subcellular location">
    <molecule>Alpha-1-microglobulin</molecule>
    <subcellularLocation>
        <location evidence="2">Secreted</location>
    </subcellularLocation>
    <subcellularLocation>
        <location evidence="2">Endoplasmic reticulum</location>
    </subcellularLocation>
    <subcellularLocation>
        <location evidence="2">Cytoplasm</location>
        <location evidence="2">Cytosol</location>
    </subcellularLocation>
    <subcellularLocation>
        <location evidence="2">Cell membrane</location>
        <topology evidence="2">Peripheral membrane protein</topology>
    </subcellularLocation>
    <subcellularLocation>
        <location evidence="2">Nucleus membrane</location>
        <topology evidence="2">Peripheral membrane protein</topology>
    </subcellularLocation>
    <subcellularLocation>
        <location evidence="2">Mitochondrion inner membrane</location>
        <topology evidence="2">Peripheral membrane protein</topology>
    </subcellularLocation>
    <subcellularLocation>
        <location evidence="2">Secreted</location>
        <location evidence="2">Extracellular space</location>
        <location evidence="2">Extracellular matrix</location>
    </subcellularLocation>
    <text evidence="2">The cellular uptake occurs via a non-endocytotic pathway and allows for localization to various membrane structures. A specific binding to plasma membrane suggests the presence of a cell receptor, yet to be identified. Directly binds collagen fibers type I.</text>
</comment>
<comment type="subcellular location">
    <molecule>Inter-alpha-trypsin inhibitor light chain</molecule>
    <subcellularLocation>
        <location evidence="2">Secreted</location>
    </subcellularLocation>
</comment>
<comment type="tissue specificity">
    <text>Expressed by the liver and secreted in plasma.</text>
</comment>
<comment type="domain">
    <molecule>Inter-alpha-trypsin inhibitor light chain</molecule>
    <text evidence="2">The Kunitz domains 1 and 2 serve as protease inhibitor domains.</text>
</comment>
<comment type="PTM">
    <text evidence="2">The precursor is proteolytically processed into separately functioning proteins.</text>
</comment>
<comment type="PTM">
    <molecule>Alpha-1-microglobulin</molecule>
    <text evidence="2">Proteolytically cleaved in the presence of oxyhemoglobin or MPO.</text>
</comment>
<comment type="PTM">
    <molecule>Alpha-1-microglobulin</molecule>
    <text evidence="2">3-hydroxykynurenine, an oxidized tryptophan metabolite that is common in biological fluids, reacts with Cys-53, Lys-111, Lys-137, and Lys-149 to form heterogeneous polycyclic chromophores including hydroxanthommatin. The reaction by alpha-1-microglobulin is autocatalytic; the human protein forms chromophore even when expressed in insect and bacterial cells. The chromophore can react with accessible cysteines forming non-reducible thioether cross-links with other molecules of alpha-1-microglobulin or with other proteins such as Ig alpha-1 chain C region 'Cys-352'.</text>
</comment>
<comment type="PTM">
    <molecule>Inter-alpha-trypsin inhibitor light chain</molecule>
    <text evidence="2">Heavy chains are interlinked with bikunin via a chondroitin 4-sulfate bridge to the C-terminal aspartate.</text>
</comment>
<comment type="PTM">
    <molecule>Inter-alpha-trypsin inhibitor light chain</molecule>
    <text evidence="2">Proteolytically cleaved by PRSS3 at Kunitz domain 2.</text>
</comment>
<comment type="similarity">
    <text evidence="8">In the N-terminal section; belongs to the calycin superfamily. Lipocalin family.</text>
</comment>
<protein>
    <recommendedName>
        <fullName>Protein AMBP</fullName>
    </recommendedName>
    <component>
        <recommendedName>
            <fullName>Alpha-1-microglobulin</fullName>
            <ecNumber evidence="2">1.6.2.-</ecNumber>
        </recommendedName>
    </component>
    <component>
        <recommendedName>
            <fullName>Inter-alpha-trypsin inhibitor light chain</fullName>
            <shortName>ITI-LC</shortName>
        </recommendedName>
        <alternativeName>
            <fullName>Bikunin</fullName>
        </alternativeName>
        <alternativeName>
            <fullName>EI-14</fullName>
        </alternativeName>
        <alternativeName>
            <fullName>HI-30</fullName>
        </alternativeName>
    </component>
    <component>
        <recommendedName>
            <fullName>Trypstatin</fullName>
        </recommendedName>
    </component>
</protein>
<dbReference type="EC" id="1.6.2.-" evidence="2"/>
<dbReference type="EMBL" id="X53685">
    <property type="protein sequence ID" value="CAA37725.1"/>
    <property type="molecule type" value="mRNA"/>
</dbReference>
<dbReference type="EMBL" id="X52087">
    <property type="protein sequence ID" value="CAA36306.1"/>
    <property type="molecule type" value="mRNA"/>
</dbReference>
<dbReference type="PIR" id="S11066">
    <property type="entry name" value="TIPGBI"/>
</dbReference>
<dbReference type="SMR" id="P04366"/>
<dbReference type="FunCoup" id="P04366">
    <property type="interactions" value="430"/>
</dbReference>
<dbReference type="STRING" id="9823.ENSSSCP00000029018"/>
<dbReference type="MEROPS" id="I02.005"/>
<dbReference type="MEROPS" id="I02.006"/>
<dbReference type="GlyCosmos" id="P04366">
    <property type="glycosylation" value="2 sites, No reported glycans"/>
</dbReference>
<dbReference type="GlyGen" id="P04366">
    <property type="glycosylation" value="3 sites"/>
</dbReference>
<dbReference type="iPTMnet" id="P04366"/>
<dbReference type="PaxDb" id="9823-ENSSSCP00000005881"/>
<dbReference type="PeptideAtlas" id="P04366"/>
<dbReference type="eggNOG" id="KOG4295">
    <property type="taxonomic scope" value="Eukaryota"/>
</dbReference>
<dbReference type="HOGENOM" id="CLU_067584_0_0_1"/>
<dbReference type="InParanoid" id="P04366"/>
<dbReference type="Proteomes" id="UP000008227">
    <property type="component" value="Unplaced"/>
</dbReference>
<dbReference type="Proteomes" id="UP000314985">
    <property type="component" value="Unplaced"/>
</dbReference>
<dbReference type="Proteomes" id="UP000694570">
    <property type="component" value="Unplaced"/>
</dbReference>
<dbReference type="Proteomes" id="UP000694571">
    <property type="component" value="Unplaced"/>
</dbReference>
<dbReference type="Proteomes" id="UP000694720">
    <property type="component" value="Unplaced"/>
</dbReference>
<dbReference type="Proteomes" id="UP000694722">
    <property type="component" value="Unplaced"/>
</dbReference>
<dbReference type="Proteomes" id="UP000694723">
    <property type="component" value="Unplaced"/>
</dbReference>
<dbReference type="Proteomes" id="UP000694724">
    <property type="component" value="Unplaced"/>
</dbReference>
<dbReference type="Proteomes" id="UP000694725">
    <property type="component" value="Unplaced"/>
</dbReference>
<dbReference type="Proteomes" id="UP000694726">
    <property type="component" value="Unplaced"/>
</dbReference>
<dbReference type="Proteomes" id="UP000694727">
    <property type="component" value="Unplaced"/>
</dbReference>
<dbReference type="Proteomes" id="UP000694728">
    <property type="component" value="Unplaced"/>
</dbReference>
<dbReference type="GO" id="GO:0009986">
    <property type="term" value="C:cell surface"/>
    <property type="evidence" value="ECO:0000318"/>
    <property type="project" value="GO_Central"/>
</dbReference>
<dbReference type="GO" id="GO:0005829">
    <property type="term" value="C:cytosol"/>
    <property type="evidence" value="ECO:0007669"/>
    <property type="project" value="UniProtKB-SubCell"/>
</dbReference>
<dbReference type="GO" id="GO:0005783">
    <property type="term" value="C:endoplasmic reticulum"/>
    <property type="evidence" value="ECO:0007669"/>
    <property type="project" value="UniProtKB-SubCell"/>
</dbReference>
<dbReference type="GO" id="GO:0005576">
    <property type="term" value="C:extracellular region"/>
    <property type="evidence" value="ECO:0007669"/>
    <property type="project" value="UniProtKB-SubCell"/>
</dbReference>
<dbReference type="GO" id="GO:0005743">
    <property type="term" value="C:mitochondrial inner membrane"/>
    <property type="evidence" value="ECO:0007669"/>
    <property type="project" value="UniProtKB-SubCell"/>
</dbReference>
<dbReference type="GO" id="GO:0031965">
    <property type="term" value="C:nuclear membrane"/>
    <property type="evidence" value="ECO:0007669"/>
    <property type="project" value="UniProtKB-SubCell"/>
</dbReference>
<dbReference type="GO" id="GO:0005886">
    <property type="term" value="C:plasma membrane"/>
    <property type="evidence" value="ECO:0000250"/>
    <property type="project" value="UniProtKB"/>
</dbReference>
<dbReference type="GO" id="GO:0020037">
    <property type="term" value="F:heme binding"/>
    <property type="evidence" value="ECO:0000250"/>
    <property type="project" value="UniProtKB"/>
</dbReference>
<dbReference type="GO" id="GO:0019862">
    <property type="term" value="F:IgA binding"/>
    <property type="evidence" value="ECO:0000250"/>
    <property type="project" value="UniProtKB"/>
</dbReference>
<dbReference type="GO" id="GO:0016491">
    <property type="term" value="F:oxidoreductase activity"/>
    <property type="evidence" value="ECO:0007669"/>
    <property type="project" value="UniProtKB-KW"/>
</dbReference>
<dbReference type="GO" id="GO:0042803">
    <property type="term" value="F:protein homodimerization activity"/>
    <property type="evidence" value="ECO:0000250"/>
    <property type="project" value="UniProtKB"/>
</dbReference>
<dbReference type="GO" id="GO:0004867">
    <property type="term" value="F:serine-type endopeptidase inhibitor activity"/>
    <property type="evidence" value="ECO:0000318"/>
    <property type="project" value="GO_Central"/>
</dbReference>
<dbReference type="CDD" id="cd22596">
    <property type="entry name" value="Kunitz_bikunin_1-like"/>
    <property type="match status" value="1"/>
</dbReference>
<dbReference type="CDD" id="cd22597">
    <property type="entry name" value="Kunitz_bikunin_2-like"/>
    <property type="match status" value="1"/>
</dbReference>
<dbReference type="CDD" id="cd19418">
    <property type="entry name" value="lipocalin_A1M-like"/>
    <property type="match status" value="1"/>
</dbReference>
<dbReference type="FunFam" id="2.40.128.20:FF:000007">
    <property type="entry name" value="Alpha-1-microglobulin/bikunin precursor"/>
    <property type="match status" value="1"/>
</dbReference>
<dbReference type="FunFam" id="4.10.410.10:FF:000010">
    <property type="entry name" value="Alpha1-microglobulin/bikunin (AMBP)"/>
    <property type="match status" value="1"/>
</dbReference>
<dbReference type="Gene3D" id="2.40.128.20">
    <property type="match status" value="1"/>
</dbReference>
<dbReference type="Gene3D" id="4.10.410.10">
    <property type="entry name" value="Pancreatic trypsin inhibitor Kunitz domain"/>
    <property type="match status" value="2"/>
</dbReference>
<dbReference type="InterPro" id="IPR002968">
    <property type="entry name" value="A1-microglobln"/>
</dbReference>
<dbReference type="InterPro" id="IPR029856">
    <property type="entry name" value="AMBP"/>
</dbReference>
<dbReference type="InterPro" id="IPR012674">
    <property type="entry name" value="Calycin"/>
</dbReference>
<dbReference type="InterPro" id="IPR002223">
    <property type="entry name" value="Kunitz_BPTI"/>
</dbReference>
<dbReference type="InterPro" id="IPR036880">
    <property type="entry name" value="Kunitz_BPTI_sf"/>
</dbReference>
<dbReference type="InterPro" id="IPR022272">
    <property type="entry name" value="Lipocalin_CS"/>
</dbReference>
<dbReference type="InterPro" id="IPR000566">
    <property type="entry name" value="Lipocln_cytosolic_FA-bd_dom"/>
</dbReference>
<dbReference type="InterPro" id="IPR020901">
    <property type="entry name" value="Prtase_inh_Kunz-CS"/>
</dbReference>
<dbReference type="PANTHER" id="PTHR46676">
    <property type="entry name" value="PROTEIN AMBP"/>
    <property type="match status" value="1"/>
</dbReference>
<dbReference type="PANTHER" id="PTHR46676:SF1">
    <property type="entry name" value="PROTEIN AMBP"/>
    <property type="match status" value="1"/>
</dbReference>
<dbReference type="Pfam" id="PF00014">
    <property type="entry name" value="Kunitz_BPTI"/>
    <property type="match status" value="2"/>
</dbReference>
<dbReference type="Pfam" id="PF00061">
    <property type="entry name" value="Lipocalin"/>
    <property type="match status" value="1"/>
</dbReference>
<dbReference type="PRINTS" id="PR01215">
    <property type="entry name" value="A1MCGLOBULIN"/>
</dbReference>
<dbReference type="PRINTS" id="PR00759">
    <property type="entry name" value="BASICPTASE"/>
</dbReference>
<dbReference type="PRINTS" id="PR00179">
    <property type="entry name" value="LIPOCALIN"/>
</dbReference>
<dbReference type="SMART" id="SM00131">
    <property type="entry name" value="KU"/>
    <property type="match status" value="2"/>
</dbReference>
<dbReference type="SUPFAM" id="SSF57362">
    <property type="entry name" value="BPTI-like"/>
    <property type="match status" value="2"/>
</dbReference>
<dbReference type="SUPFAM" id="SSF50814">
    <property type="entry name" value="Lipocalins"/>
    <property type="match status" value="1"/>
</dbReference>
<dbReference type="PROSITE" id="PS00280">
    <property type="entry name" value="BPTI_KUNITZ_1"/>
    <property type="match status" value="2"/>
</dbReference>
<dbReference type="PROSITE" id="PS50279">
    <property type="entry name" value="BPTI_KUNITZ_2"/>
    <property type="match status" value="2"/>
</dbReference>
<dbReference type="PROSITE" id="PS00213">
    <property type="entry name" value="LIPOCALIN"/>
    <property type="match status" value="1"/>
</dbReference>
<sequence length="337" mass="37691">AVSASPVLTLPNDIQVQENFDLSRIYGKWFHVAVGSTCPWLKRFKDKMTMGTLMLGEGATEREISVTKTHRRKGICEVISGAYEKTSTDGKFLYHKSKWNITMESYVVHTNYDEYAIFLTKKFSRRHGPTLTAKLYGREPQLRESLLEEFREVALGVGIPEDSIFTMPDRGECVPGEQEPEPTLLSRARRAVLPQEEEGSGAGQPVADFSKKEDSCQLGYSQGPCLGMIKRYFYNGSSMACETFHYGGCMGNGNNFVSEKECLQTCRTVEACSLPIVSGPCRGFFQLWAFDAVQGKCVLFNYGGCQGNGNQFYSEKECKEYCGVPGEEDEELLRSSN</sequence>
<keyword id="KW-1003">Cell membrane</keyword>
<keyword id="KW-0157">Chromophore</keyword>
<keyword id="KW-0165">Cleavage on pair of basic residues</keyword>
<keyword id="KW-0963">Cytoplasm</keyword>
<keyword id="KW-0903">Direct protein sequencing</keyword>
<keyword id="KW-1015">Disulfide bond</keyword>
<keyword id="KW-0256">Endoplasmic reticulum</keyword>
<keyword id="KW-0272">Extracellular matrix</keyword>
<keyword id="KW-0325">Glycoprotein</keyword>
<keyword id="KW-0472">Membrane</keyword>
<keyword id="KW-0496">Mitochondrion</keyword>
<keyword id="KW-0999">Mitochondrion inner membrane</keyword>
<keyword id="KW-0539">Nucleus</keyword>
<keyword id="KW-0560">Oxidoreductase</keyword>
<keyword id="KW-0646">Protease inhibitor</keyword>
<keyword id="KW-0654">Proteoglycan</keyword>
<keyword id="KW-1185">Reference proteome</keyword>
<keyword id="KW-0677">Repeat</keyword>
<keyword id="KW-0964">Secreted</keyword>
<keyword id="KW-0722">Serine protease inhibitor</keyword>
<keyword id="KW-0732">Signal</keyword>
<proteinExistence type="evidence at protein level"/>
<gene>
    <name type="primary">AMBP</name>
    <name type="synonym">ITIL</name>
</gene>
<reference key="1">
    <citation type="journal article" date="1990" name="FEBS Lett.">
        <title>Complementary DNA and deduced amino acid sequences of procine alpha 1-microglobulin and bikunin.</title>
        <authorList>
            <person name="Gebhard W."/>
            <person name="Schreitmueller T."/>
            <person name="Vetr H."/>
            <person name="Wachter E."/>
            <person name="Hochstrasser K."/>
        </authorList>
    </citation>
    <scope>NUCLEOTIDE SEQUENCE [MRNA]</scope>
</reference>
<reference key="2">
    <citation type="journal article" date="1991" name="Biochim. Biophys. Acta">
        <title>Molecular cloning of porcine alpha 1-microglobulin/HI-30 reveals developmental and tissue-specific expression of two variant messenger ribonucleic acids.</title>
        <authorList>
            <person name="Tavakkol A."/>
        </authorList>
    </citation>
    <scope>NUCLEOTIDE SEQUENCE [MRNA] OF 2-337</scope>
    <source>
        <tissue>Liver</tissue>
    </source>
</reference>
<reference key="3">
    <citation type="journal article" date="1985" name="Biol. Chem. Hoppe-Seyler">
        <title>Kunitz-type proteinase inhibitors derived by limited proteolysis of the inter-alpha-trypsin inhibitor, X. The amino-acid sequences of the trypsin-released inhibitors from horse and pig inter-alpha-trypsin inhibitors.</title>
        <authorList>
            <person name="Hochstrasser K."/>
            <person name="Wachter E."/>
            <person name="Albrecht G.J."/>
            <person name="Reisinger P."/>
        </authorList>
    </citation>
    <scope>PROTEIN SEQUENCE OF 212-334</scope>
</reference>
<feature type="signal peptide" evidence="1">
    <location>
        <begin position="1" status="less than"/>
        <end position="4"/>
    </location>
</feature>
<feature type="chain" id="PRO_0000017895" description="Alpha-1-microglobulin">
    <location>
        <begin position="5"/>
        <end position="188"/>
    </location>
</feature>
<feature type="chain" id="PRO_0000017896" description="Inter-alpha-trypsin inhibitor light chain">
    <location>
        <begin position="191"/>
        <end position="337"/>
    </location>
</feature>
<feature type="chain" id="PRO_0000318929" description="Trypstatin" evidence="1">
    <location>
        <begin position="269"/>
        <end position="329"/>
    </location>
</feature>
<feature type="domain" description="BPTI/Kunitz inhibitor 1" evidence="6">
    <location>
        <begin position="216"/>
        <end position="266"/>
    </location>
</feature>
<feature type="domain" description="BPTI/Kunitz inhibitor 2" evidence="6">
    <location>
        <begin position="272"/>
        <end position="322"/>
    </location>
</feature>
<feature type="binding site" description="covalent" evidence="2">
    <location>
        <position position="38"/>
    </location>
    <ligand>
        <name>3-hydroxy-L-kynurenine</name>
        <dbReference type="ChEBI" id="CHEBI:58125"/>
        <note>multimeric 3-hydroxykynurenine chromophore</note>
    </ligand>
</feature>
<feature type="binding site" description="covalent" evidence="2">
    <location>
        <position position="96"/>
    </location>
    <ligand>
        <name>3-hydroxy-L-kynurenine</name>
        <dbReference type="ChEBI" id="CHEBI:58125"/>
        <note>multimeric 3-hydroxykynurenine chromophore</note>
    </ligand>
</feature>
<feature type="binding site" description="covalent" evidence="2">
    <location>
        <position position="122"/>
    </location>
    <ligand>
        <name>3-hydroxy-L-kynurenine</name>
        <dbReference type="ChEBI" id="CHEBI:58125"/>
        <note>multimeric 3-hydroxykynurenine chromophore</note>
    </ligand>
</feature>
<feature type="binding site" description="covalent" evidence="2">
    <location>
        <position position="134"/>
    </location>
    <ligand>
        <name>3-hydroxy-L-kynurenine</name>
        <dbReference type="ChEBI" id="CHEBI:58125"/>
        <note>multimeric 3-hydroxykynurenine chromophore</note>
    </ligand>
</feature>
<feature type="site" description="Cleavage; in the presence of oxyhemoglobin or MPO" evidence="2">
    <location>
        <position position="184"/>
    </location>
</feature>
<feature type="site" description="Inhibitory (P1) (chymotrypsin, elastase)">
    <location>
        <begin position="226"/>
        <end position="227"/>
    </location>
</feature>
<feature type="site" description="Inhibitory (P1) (trypsin)">
    <location>
        <begin position="282"/>
        <end position="283"/>
    </location>
</feature>
<feature type="glycosylation site" description="N-linked (GlcNAc...) asparagine" evidence="5">
    <location>
        <position position="100"/>
    </location>
</feature>
<feature type="glycosylation site" description="O-linked (Xyl...) (chondroitin sulfate) serine" evidence="2">
    <location>
        <position position="200"/>
    </location>
</feature>
<feature type="glycosylation site" description="N-linked (GlcNAc...) asparagine" evidence="7">
    <location>
        <position position="235"/>
    </location>
</feature>
<feature type="disulfide bond" evidence="6">
    <location>
        <begin position="76"/>
        <end position="173"/>
    </location>
</feature>
<feature type="disulfide bond">
    <location>
        <begin position="216"/>
        <end position="266"/>
    </location>
</feature>
<feature type="disulfide bond">
    <location>
        <begin position="225"/>
        <end position="249"/>
    </location>
</feature>
<feature type="disulfide bond">
    <location>
        <begin position="241"/>
        <end position="262"/>
    </location>
</feature>
<feature type="disulfide bond">
    <location>
        <begin position="272"/>
        <end position="322"/>
    </location>
</feature>
<feature type="disulfide bond">
    <location>
        <begin position="281"/>
        <end position="305"/>
    </location>
</feature>
<feature type="disulfide bond">
    <location>
        <begin position="297"/>
        <end position="318"/>
    </location>
</feature>
<feature type="sequence conflict" description="In Ref. 2; CAA36306." evidence="8" ref="2">
    <original>T</original>
    <variation>M</variation>
    <location>
        <position position="49"/>
    </location>
</feature>
<feature type="sequence conflict" description="In Ref. 3; AA sequence." evidence="8" ref="3">
    <original>E</original>
    <variation>Q</variation>
    <location>
        <position position="259"/>
    </location>
</feature>
<feature type="sequence conflict" description="In Ref. 3; AA sequence." evidence="8" ref="3">
    <original>E</original>
    <variation>S</variation>
    <location>
        <position position="270"/>
    </location>
</feature>
<feature type="sequence conflict" description="In Ref. 3; AA sequence." evidence="8" ref="3">
    <original>S</original>
    <variation>Q</variation>
    <location>
        <position position="278"/>
    </location>
</feature>
<feature type="sequence conflict" description="In Ref. 3; AA sequence." evidence="8" ref="3">
    <original>G</original>
    <variation>A</variation>
    <location>
        <position position="283"/>
    </location>
</feature>
<feature type="sequence conflict" description="In Ref. 3; AA sequence." evidence="8" ref="3">
    <original>FQ</original>
    <variation>IR</variation>
    <location>
        <begin position="285"/>
        <end position="286"/>
    </location>
</feature>
<feature type="sequence conflict" description="In Ref. 3; AA sequence." evidence="8" ref="3">
    <original>V</original>
    <variation>A</variation>
    <location>
        <position position="293"/>
    </location>
</feature>
<feature type="sequence conflict" description="In Ref. 3; AA sequence." evidence="8" ref="3">
    <original>Q</original>
    <variation>K</variation>
    <location>
        <position position="311"/>
    </location>
</feature>
<feature type="sequence conflict" description="In Ref. 3; AA sequence." evidence="8" ref="3">
    <original>E</original>
    <variation>Q</variation>
    <location>
        <position position="315"/>
    </location>
</feature>
<feature type="non-terminal residue">
    <location>
        <position position="1"/>
    </location>
</feature>
<evidence type="ECO:0000250" key="1"/>
<evidence type="ECO:0000250" key="2">
    <source>
        <dbReference type="UniProtKB" id="P02760"/>
    </source>
</evidence>
<evidence type="ECO:0000250" key="3">
    <source>
        <dbReference type="UniProtKB" id="Q07456"/>
    </source>
</evidence>
<evidence type="ECO:0000250" key="4">
    <source>
        <dbReference type="UniProtKB" id="Q64240"/>
    </source>
</evidence>
<evidence type="ECO:0000255" key="5"/>
<evidence type="ECO:0000255" key="6">
    <source>
        <dbReference type="PROSITE-ProRule" id="PRU00031"/>
    </source>
</evidence>
<evidence type="ECO:0000269" key="7">
    <source>
    </source>
</evidence>
<evidence type="ECO:0000305" key="8"/>
<name>AMBP_PIG</name>